<sequence>MSSESEKDKERLIQAAKLFFFHIRDLVSFINRFVELFNLTMKTQILPMNLNEESCIKDFFEQMIRNFKEMQLMVDGKHKQMQKEPLCSKVLTAMTSAVEKCATIAPHHTAEDMLRNIQTSGAALVLKTSHVLVNLETSLSLLMQFPIMGLRLSDLYREETKEQSDATSDATTSEKNKSPECPKATTEETLRKLQDVLSPENAHTPVEAAADELEQFVKSMEITLQVLQKSIKTMEGDIFVLTQVQGK</sequence>
<protein>
    <recommendedName>
        <fullName>Uncharacterized protein C12orf60 homolog</fullName>
    </recommendedName>
</protein>
<organism>
    <name type="scientific">Mus musculus</name>
    <name type="common">Mouse</name>
    <dbReference type="NCBI Taxonomy" id="10090"/>
    <lineage>
        <taxon>Eukaryota</taxon>
        <taxon>Metazoa</taxon>
        <taxon>Chordata</taxon>
        <taxon>Craniata</taxon>
        <taxon>Vertebrata</taxon>
        <taxon>Euteleostomi</taxon>
        <taxon>Mammalia</taxon>
        <taxon>Eutheria</taxon>
        <taxon>Euarchontoglires</taxon>
        <taxon>Glires</taxon>
        <taxon>Rodentia</taxon>
        <taxon>Myomorpha</taxon>
        <taxon>Muroidea</taxon>
        <taxon>Muridae</taxon>
        <taxon>Murinae</taxon>
        <taxon>Mus</taxon>
        <taxon>Mus</taxon>
    </lineage>
</organism>
<keyword id="KW-1185">Reference proteome</keyword>
<feature type="chain" id="PRO_0000274272" description="Uncharacterized protein C12orf60 homolog">
    <location>
        <begin position="1"/>
        <end position="247"/>
    </location>
</feature>
<feature type="region of interest" description="Disordered" evidence="1">
    <location>
        <begin position="161"/>
        <end position="187"/>
    </location>
</feature>
<feature type="compositionally biased region" description="Basic and acidic residues" evidence="1">
    <location>
        <begin position="172"/>
        <end position="187"/>
    </location>
</feature>
<feature type="sequence conflict" description="In Ref. 1; BAC32007." evidence="2" ref="1">
    <original>TAMT</original>
    <variation>PAVI</variation>
    <location>
        <begin position="92"/>
        <end position="95"/>
    </location>
</feature>
<feature type="sequence conflict" description="In Ref. 1; BAC32007." evidence="2" ref="1">
    <original>R</original>
    <variation>G</variation>
    <location>
        <position position="115"/>
    </location>
</feature>
<feature type="sequence conflict" description="In Ref. 1; BAC32007." evidence="2" ref="1">
    <original>M</original>
    <variation>T</variation>
    <location>
        <position position="143"/>
    </location>
</feature>
<feature type="sequence conflict" description="In Ref. 1; BAC32007." evidence="2" ref="1">
    <original>T</original>
    <variation>I</variation>
    <location>
        <position position="171"/>
    </location>
</feature>
<feature type="sequence conflict" description="In Ref. 1; BAC32007." evidence="2" ref="1">
    <original>F</original>
    <variation>S</variation>
    <location>
        <position position="239"/>
    </location>
</feature>
<reference key="1">
    <citation type="journal article" date="2005" name="Science">
        <title>The transcriptional landscape of the mammalian genome.</title>
        <authorList>
            <person name="Carninci P."/>
            <person name="Kasukawa T."/>
            <person name="Katayama S."/>
            <person name="Gough J."/>
            <person name="Frith M.C."/>
            <person name="Maeda N."/>
            <person name="Oyama R."/>
            <person name="Ravasi T."/>
            <person name="Lenhard B."/>
            <person name="Wells C."/>
            <person name="Kodzius R."/>
            <person name="Shimokawa K."/>
            <person name="Bajic V.B."/>
            <person name="Brenner S.E."/>
            <person name="Batalov S."/>
            <person name="Forrest A.R."/>
            <person name="Zavolan M."/>
            <person name="Davis M.J."/>
            <person name="Wilming L.G."/>
            <person name="Aidinis V."/>
            <person name="Allen J.E."/>
            <person name="Ambesi-Impiombato A."/>
            <person name="Apweiler R."/>
            <person name="Aturaliya R.N."/>
            <person name="Bailey T.L."/>
            <person name="Bansal M."/>
            <person name="Baxter L."/>
            <person name="Beisel K.W."/>
            <person name="Bersano T."/>
            <person name="Bono H."/>
            <person name="Chalk A.M."/>
            <person name="Chiu K.P."/>
            <person name="Choudhary V."/>
            <person name="Christoffels A."/>
            <person name="Clutterbuck D.R."/>
            <person name="Crowe M.L."/>
            <person name="Dalla E."/>
            <person name="Dalrymple B.P."/>
            <person name="de Bono B."/>
            <person name="Della Gatta G."/>
            <person name="di Bernardo D."/>
            <person name="Down T."/>
            <person name="Engstrom P."/>
            <person name="Fagiolini M."/>
            <person name="Faulkner G."/>
            <person name="Fletcher C.F."/>
            <person name="Fukushima T."/>
            <person name="Furuno M."/>
            <person name="Futaki S."/>
            <person name="Gariboldi M."/>
            <person name="Georgii-Hemming P."/>
            <person name="Gingeras T.R."/>
            <person name="Gojobori T."/>
            <person name="Green R.E."/>
            <person name="Gustincich S."/>
            <person name="Harbers M."/>
            <person name="Hayashi Y."/>
            <person name="Hensch T.K."/>
            <person name="Hirokawa N."/>
            <person name="Hill D."/>
            <person name="Huminiecki L."/>
            <person name="Iacono M."/>
            <person name="Ikeo K."/>
            <person name="Iwama A."/>
            <person name="Ishikawa T."/>
            <person name="Jakt M."/>
            <person name="Kanapin A."/>
            <person name="Katoh M."/>
            <person name="Kawasawa Y."/>
            <person name="Kelso J."/>
            <person name="Kitamura H."/>
            <person name="Kitano H."/>
            <person name="Kollias G."/>
            <person name="Krishnan S.P."/>
            <person name="Kruger A."/>
            <person name="Kummerfeld S.K."/>
            <person name="Kurochkin I.V."/>
            <person name="Lareau L.F."/>
            <person name="Lazarevic D."/>
            <person name="Lipovich L."/>
            <person name="Liu J."/>
            <person name="Liuni S."/>
            <person name="McWilliam S."/>
            <person name="Madan Babu M."/>
            <person name="Madera M."/>
            <person name="Marchionni L."/>
            <person name="Matsuda H."/>
            <person name="Matsuzawa S."/>
            <person name="Miki H."/>
            <person name="Mignone F."/>
            <person name="Miyake S."/>
            <person name="Morris K."/>
            <person name="Mottagui-Tabar S."/>
            <person name="Mulder N."/>
            <person name="Nakano N."/>
            <person name="Nakauchi H."/>
            <person name="Ng P."/>
            <person name="Nilsson R."/>
            <person name="Nishiguchi S."/>
            <person name="Nishikawa S."/>
            <person name="Nori F."/>
            <person name="Ohara O."/>
            <person name="Okazaki Y."/>
            <person name="Orlando V."/>
            <person name="Pang K.C."/>
            <person name="Pavan W.J."/>
            <person name="Pavesi G."/>
            <person name="Pesole G."/>
            <person name="Petrovsky N."/>
            <person name="Piazza S."/>
            <person name="Reed J."/>
            <person name="Reid J.F."/>
            <person name="Ring B.Z."/>
            <person name="Ringwald M."/>
            <person name="Rost B."/>
            <person name="Ruan Y."/>
            <person name="Salzberg S.L."/>
            <person name="Sandelin A."/>
            <person name="Schneider C."/>
            <person name="Schoenbach C."/>
            <person name="Sekiguchi K."/>
            <person name="Semple C.A."/>
            <person name="Seno S."/>
            <person name="Sessa L."/>
            <person name="Sheng Y."/>
            <person name="Shibata Y."/>
            <person name="Shimada H."/>
            <person name="Shimada K."/>
            <person name="Silva D."/>
            <person name="Sinclair B."/>
            <person name="Sperling S."/>
            <person name="Stupka E."/>
            <person name="Sugiura K."/>
            <person name="Sultana R."/>
            <person name="Takenaka Y."/>
            <person name="Taki K."/>
            <person name="Tammoja K."/>
            <person name="Tan S.L."/>
            <person name="Tang S."/>
            <person name="Taylor M.S."/>
            <person name="Tegner J."/>
            <person name="Teichmann S.A."/>
            <person name="Ueda H.R."/>
            <person name="van Nimwegen E."/>
            <person name="Verardo R."/>
            <person name="Wei C.L."/>
            <person name="Yagi K."/>
            <person name="Yamanishi H."/>
            <person name="Zabarovsky E."/>
            <person name="Zhu S."/>
            <person name="Zimmer A."/>
            <person name="Hide W."/>
            <person name="Bult C."/>
            <person name="Grimmond S.M."/>
            <person name="Teasdale R.D."/>
            <person name="Liu E.T."/>
            <person name="Brusic V."/>
            <person name="Quackenbush J."/>
            <person name="Wahlestedt C."/>
            <person name="Mattick J.S."/>
            <person name="Hume D.A."/>
            <person name="Kai C."/>
            <person name="Sasaki D."/>
            <person name="Tomaru Y."/>
            <person name="Fukuda S."/>
            <person name="Kanamori-Katayama M."/>
            <person name="Suzuki M."/>
            <person name="Aoki J."/>
            <person name="Arakawa T."/>
            <person name="Iida J."/>
            <person name="Imamura K."/>
            <person name="Itoh M."/>
            <person name="Kato T."/>
            <person name="Kawaji H."/>
            <person name="Kawagashira N."/>
            <person name="Kawashima T."/>
            <person name="Kojima M."/>
            <person name="Kondo S."/>
            <person name="Konno H."/>
            <person name="Nakano K."/>
            <person name="Ninomiya N."/>
            <person name="Nishio T."/>
            <person name="Okada M."/>
            <person name="Plessy C."/>
            <person name="Shibata K."/>
            <person name="Shiraki T."/>
            <person name="Suzuki S."/>
            <person name="Tagami M."/>
            <person name="Waki K."/>
            <person name="Watahiki A."/>
            <person name="Okamura-Oho Y."/>
            <person name="Suzuki H."/>
            <person name="Kawai J."/>
            <person name="Hayashizaki Y."/>
        </authorList>
    </citation>
    <scope>NUCLEOTIDE SEQUENCE [LARGE SCALE MRNA]</scope>
    <source>
        <strain>C57BL/6J</strain>
        <tissue>Retina</tissue>
    </source>
</reference>
<reference key="2">
    <citation type="journal article" date="2004" name="Genome Res.">
        <title>The status, quality, and expansion of the NIH full-length cDNA project: the Mammalian Gene Collection (MGC).</title>
        <authorList>
            <consortium name="The MGC Project Team"/>
        </authorList>
    </citation>
    <scope>NUCLEOTIDE SEQUENCE [LARGE SCALE MRNA]</scope>
    <source>
        <tissue>Testis</tissue>
    </source>
</reference>
<proteinExistence type="evidence at transcript level"/>
<evidence type="ECO:0000256" key="1">
    <source>
        <dbReference type="SAM" id="MobiDB-lite"/>
    </source>
</evidence>
<evidence type="ECO:0000305" key="2"/>
<accession>Q810N5</accession>
<accession>Q8C8R6</accession>
<name>CL060_MOUSE</name>
<dbReference type="EMBL" id="AK044622">
    <property type="protein sequence ID" value="BAC32007.1"/>
    <property type="molecule type" value="mRNA"/>
</dbReference>
<dbReference type="EMBL" id="BC049715">
    <property type="protein sequence ID" value="AAH49715.1"/>
    <property type="molecule type" value="mRNA"/>
</dbReference>
<dbReference type="CCDS" id="CCDS39685.1"/>
<dbReference type="RefSeq" id="NP_848891.2">
    <property type="nucleotide sequence ID" value="NM_178776.3"/>
</dbReference>
<dbReference type="RefSeq" id="XP_006506325.1">
    <property type="nucleotide sequence ID" value="XM_006506262.4"/>
</dbReference>
<dbReference type="RefSeq" id="XP_006506326.1">
    <property type="nucleotide sequence ID" value="XM_006506263.4"/>
</dbReference>
<dbReference type="RefSeq" id="XP_006506327.1">
    <property type="nucleotide sequence ID" value="XM_006506264.4"/>
</dbReference>
<dbReference type="RefSeq" id="XP_006506328.1">
    <property type="nucleotide sequence ID" value="XM_006506265.4"/>
</dbReference>
<dbReference type="RefSeq" id="XP_006506329.1">
    <property type="nucleotide sequence ID" value="XM_006506266.4"/>
</dbReference>
<dbReference type="RefSeq" id="XP_017177123.1">
    <property type="nucleotide sequence ID" value="XM_017321634.2"/>
</dbReference>
<dbReference type="RefSeq" id="XP_017177124.1">
    <property type="nucleotide sequence ID" value="XM_017321635.2"/>
</dbReference>
<dbReference type="RefSeq" id="XP_017177125.1">
    <property type="nucleotide sequence ID" value="XM_017321636.2"/>
</dbReference>
<dbReference type="RefSeq" id="XP_030111315.1">
    <property type="nucleotide sequence ID" value="XM_030255455.2"/>
</dbReference>
<dbReference type="SMR" id="Q810N5"/>
<dbReference type="FunCoup" id="Q810N5">
    <property type="interactions" value="4"/>
</dbReference>
<dbReference type="STRING" id="10090.ENSMUSP00000145015"/>
<dbReference type="iPTMnet" id="Q810N5"/>
<dbReference type="PhosphoSitePlus" id="Q810N5"/>
<dbReference type="SwissPalm" id="Q810N5"/>
<dbReference type="PaxDb" id="10090-ENSMUSP00000049512"/>
<dbReference type="Antibodypedia" id="51929">
    <property type="antibodies" value="36 antibodies from 10 providers"/>
</dbReference>
<dbReference type="DNASU" id="320135"/>
<dbReference type="Ensembl" id="ENSMUST00000052702.7">
    <property type="protein sequence ID" value="ENSMUSP00000049512.7"/>
    <property type="gene ID" value="ENSMUSG00000047515.9"/>
</dbReference>
<dbReference type="Ensembl" id="ENSMUST00000163640.2">
    <property type="protein sequence ID" value="ENSMUSP00000133266.2"/>
    <property type="gene ID" value="ENSMUSG00000047515.9"/>
</dbReference>
<dbReference type="Ensembl" id="ENSMUST00000203499.2">
    <property type="protein sequence ID" value="ENSMUSP00000145015.2"/>
    <property type="gene ID" value="ENSMUSG00000047515.9"/>
</dbReference>
<dbReference type="GeneID" id="320135"/>
<dbReference type="KEGG" id="mmu:320135"/>
<dbReference type="UCSC" id="uc009emi.2">
    <property type="organism name" value="mouse"/>
</dbReference>
<dbReference type="AGR" id="MGI:3605234"/>
<dbReference type="MGI" id="MGI:3605234">
    <property type="gene designation" value="BC049715"/>
</dbReference>
<dbReference type="VEuPathDB" id="HostDB:ENSMUSG00000047515"/>
<dbReference type="eggNOG" id="ENOG502S734">
    <property type="taxonomic scope" value="Eukaryota"/>
</dbReference>
<dbReference type="GeneTree" id="ENSGT00390000003800"/>
<dbReference type="HOGENOM" id="CLU_1124225_0_0_1"/>
<dbReference type="InParanoid" id="Q810N5"/>
<dbReference type="OMA" id="MKFPIMN"/>
<dbReference type="OrthoDB" id="6112619at2759"/>
<dbReference type="PhylomeDB" id="Q810N5"/>
<dbReference type="TreeFam" id="TF338464"/>
<dbReference type="BioGRID-ORCS" id="320135">
    <property type="hits" value="1 hit in 77 CRISPR screens"/>
</dbReference>
<dbReference type="PRO" id="PR:Q810N5"/>
<dbReference type="Proteomes" id="UP000000589">
    <property type="component" value="Chromosome 6"/>
</dbReference>
<dbReference type="RNAct" id="Q810N5">
    <property type="molecule type" value="protein"/>
</dbReference>
<dbReference type="Bgee" id="ENSMUSG00000047515">
    <property type="expression patterns" value="Expressed in humerus cartilage element and 59 other cell types or tissues"/>
</dbReference>
<dbReference type="ExpressionAtlas" id="Q810N5">
    <property type="expression patterns" value="baseline and differential"/>
</dbReference>
<dbReference type="InterPro" id="IPR027895">
    <property type="entry name" value="DUF4533"/>
</dbReference>
<dbReference type="PANTHER" id="PTHR36289">
    <property type="entry name" value="CHROMOSOME 12 OPEN READING FRAME 60"/>
    <property type="match status" value="1"/>
</dbReference>
<dbReference type="PANTHER" id="PTHR36289:SF1">
    <property type="entry name" value="CHROMOSOME 12 OPEN READING FRAME 60"/>
    <property type="match status" value="1"/>
</dbReference>
<dbReference type="Pfam" id="PF15047">
    <property type="entry name" value="DUF4533"/>
    <property type="match status" value="1"/>
</dbReference>